<proteinExistence type="evidence at protein level"/>
<dbReference type="EMBL" id="AL391143">
    <property type="protein sequence ID" value="CAC01757.1"/>
    <property type="molecule type" value="Genomic_DNA"/>
</dbReference>
<dbReference type="EMBL" id="CP002688">
    <property type="protein sequence ID" value="AED92180.1"/>
    <property type="molecule type" value="Genomic_DNA"/>
</dbReference>
<dbReference type="EMBL" id="AK228825">
    <property type="protein sequence ID" value="BAF00721.1"/>
    <property type="molecule type" value="mRNA"/>
</dbReference>
<dbReference type="PIR" id="T51536">
    <property type="entry name" value="T51536"/>
</dbReference>
<dbReference type="RefSeq" id="NP_197062.1">
    <property type="nucleotide sequence ID" value="NM_121562.3"/>
</dbReference>
<dbReference type="FunCoup" id="Q9LF24">
    <property type="interactions" value="3"/>
</dbReference>
<dbReference type="STRING" id="3702.Q9LF24"/>
<dbReference type="iPTMnet" id="Q9LF24"/>
<dbReference type="PaxDb" id="3702-AT5G15580.1"/>
<dbReference type="ProteomicsDB" id="238440"/>
<dbReference type="EnsemblPlants" id="AT5G15580.1">
    <property type="protein sequence ID" value="AT5G15580.1"/>
    <property type="gene ID" value="AT5G15580"/>
</dbReference>
<dbReference type="GeneID" id="831411"/>
<dbReference type="Gramene" id="AT5G15580.1">
    <property type="protein sequence ID" value="AT5G15580.1"/>
    <property type="gene ID" value="AT5G15580"/>
</dbReference>
<dbReference type="KEGG" id="ath:AT5G15580"/>
<dbReference type="Araport" id="AT5G15580"/>
<dbReference type="TAIR" id="AT5G15580">
    <property type="gene designation" value="LNG1"/>
</dbReference>
<dbReference type="eggNOG" id="ENOG502R7XZ">
    <property type="taxonomic scope" value="Eukaryota"/>
</dbReference>
<dbReference type="HOGENOM" id="CLU_007647_0_0_1"/>
<dbReference type="InParanoid" id="Q9LF24"/>
<dbReference type="OMA" id="QSQGMNW"/>
<dbReference type="PhylomeDB" id="Q9LF24"/>
<dbReference type="PRO" id="PR:Q9LF24"/>
<dbReference type="Proteomes" id="UP000006548">
    <property type="component" value="Chromosome 5"/>
</dbReference>
<dbReference type="ExpressionAtlas" id="Q9LF24">
    <property type="expression patterns" value="baseline and differential"/>
</dbReference>
<dbReference type="GO" id="GO:0005829">
    <property type="term" value="C:cytosol"/>
    <property type="evidence" value="ECO:0000314"/>
    <property type="project" value="TAIR"/>
</dbReference>
<dbReference type="GO" id="GO:0005634">
    <property type="term" value="C:nucleus"/>
    <property type="evidence" value="ECO:0000314"/>
    <property type="project" value="TAIR"/>
</dbReference>
<dbReference type="GO" id="GO:0051513">
    <property type="term" value="P:regulation of monopolar cell growth"/>
    <property type="evidence" value="ECO:0000315"/>
    <property type="project" value="TAIR"/>
</dbReference>
<dbReference type="GO" id="GO:0009826">
    <property type="term" value="P:unidimensional cell growth"/>
    <property type="evidence" value="ECO:0000316"/>
    <property type="project" value="TAIR"/>
</dbReference>
<dbReference type="InterPro" id="IPR025486">
    <property type="entry name" value="DUF4378"/>
</dbReference>
<dbReference type="InterPro" id="IPR033334">
    <property type="entry name" value="LNG1/2"/>
</dbReference>
<dbReference type="PANTHER" id="PTHR31680">
    <property type="entry name" value="LONGIFOLIA PROTEIN"/>
    <property type="match status" value="1"/>
</dbReference>
<dbReference type="PANTHER" id="PTHR31680:SF22">
    <property type="entry name" value="PROTEIN LONGIFOLIA 1"/>
    <property type="match status" value="1"/>
</dbReference>
<dbReference type="Pfam" id="PF14309">
    <property type="entry name" value="DUF4378"/>
    <property type="match status" value="1"/>
</dbReference>
<protein>
    <recommendedName>
        <fullName>Protein LONGIFOLIA 1</fullName>
    </recommendedName>
    <alternativeName>
        <fullName>Protein TON1 RECRUITING MOTIF 2</fullName>
    </alternativeName>
</protein>
<organism>
    <name type="scientific">Arabidopsis thaliana</name>
    <name type="common">Mouse-ear cress</name>
    <dbReference type="NCBI Taxonomy" id="3702"/>
    <lineage>
        <taxon>Eukaryota</taxon>
        <taxon>Viridiplantae</taxon>
        <taxon>Streptophyta</taxon>
        <taxon>Embryophyta</taxon>
        <taxon>Tracheophyta</taxon>
        <taxon>Spermatophyta</taxon>
        <taxon>Magnoliopsida</taxon>
        <taxon>eudicotyledons</taxon>
        <taxon>Gunneridae</taxon>
        <taxon>Pentapetalae</taxon>
        <taxon>rosids</taxon>
        <taxon>malvids</taxon>
        <taxon>Brassicales</taxon>
        <taxon>Brassicaceae</taxon>
        <taxon>Camelineae</taxon>
        <taxon>Arabidopsis</taxon>
    </lineage>
</organism>
<keyword id="KW-0539">Nucleus</keyword>
<keyword id="KW-1185">Reference proteome</keyword>
<evidence type="ECO:0000256" key="1">
    <source>
        <dbReference type="SAM" id="MobiDB-lite"/>
    </source>
</evidence>
<evidence type="ECO:0000269" key="2">
    <source>
    </source>
</evidence>
<evidence type="ECO:0000269" key="3">
    <source>
    </source>
</evidence>
<evidence type="ECO:0000305" key="4">
    <source>
    </source>
</evidence>
<comment type="function">
    <text evidence="2">In association with LNG2, regulates leaf morphology by promoting longitudinal polar cell elongation independently of ROT3.</text>
</comment>
<comment type="subunit">
    <text evidence="3">Interacts (via C-terminus) with TON1A and TON1B.</text>
</comment>
<comment type="subcellular location">
    <subcellularLocation>
        <location evidence="2">Nucleus</location>
    </subcellularLocation>
</comment>
<comment type="tissue specificity">
    <text evidence="2">Expressed in roots, petioles, leaf blades and floral organs.</text>
</comment>
<comment type="disruption phenotype">
    <text evidence="2">No visible phenotype under normal growth conditions, but the lng1 and lng2 double mutant shows reduced length of cotyledons, rosette leaves, siliques and flowers.</text>
</comment>
<comment type="miscellaneous">
    <text evidence="4">The gain-of-function mutant lng1-1D (T-DNA tagging) shows increased elongation of aerial lateral organs, partly due to elongated cells in leaves, petals and siliques.</text>
</comment>
<name>LNG1_ARATH</name>
<reference key="1">
    <citation type="journal article" date="2000" name="Nature">
        <title>Sequence and analysis of chromosome 5 of the plant Arabidopsis thaliana.</title>
        <authorList>
            <person name="Tabata S."/>
            <person name="Kaneko T."/>
            <person name="Nakamura Y."/>
            <person name="Kotani H."/>
            <person name="Kato T."/>
            <person name="Asamizu E."/>
            <person name="Miyajima N."/>
            <person name="Sasamoto S."/>
            <person name="Kimura T."/>
            <person name="Hosouchi T."/>
            <person name="Kawashima K."/>
            <person name="Kohara M."/>
            <person name="Matsumoto M."/>
            <person name="Matsuno A."/>
            <person name="Muraki A."/>
            <person name="Nakayama S."/>
            <person name="Nakazaki N."/>
            <person name="Naruo K."/>
            <person name="Okumura S."/>
            <person name="Shinpo S."/>
            <person name="Takeuchi C."/>
            <person name="Wada T."/>
            <person name="Watanabe A."/>
            <person name="Yamada M."/>
            <person name="Yasuda M."/>
            <person name="Sato S."/>
            <person name="de la Bastide M."/>
            <person name="Huang E."/>
            <person name="Spiegel L."/>
            <person name="Gnoj L."/>
            <person name="O'Shaughnessy A."/>
            <person name="Preston R."/>
            <person name="Habermann K."/>
            <person name="Murray J."/>
            <person name="Johnson D."/>
            <person name="Rohlfing T."/>
            <person name="Nelson J."/>
            <person name="Stoneking T."/>
            <person name="Pepin K."/>
            <person name="Spieth J."/>
            <person name="Sekhon M."/>
            <person name="Armstrong J."/>
            <person name="Becker M."/>
            <person name="Belter E."/>
            <person name="Cordum H."/>
            <person name="Cordes M."/>
            <person name="Courtney L."/>
            <person name="Courtney W."/>
            <person name="Dante M."/>
            <person name="Du H."/>
            <person name="Edwards J."/>
            <person name="Fryman J."/>
            <person name="Haakensen B."/>
            <person name="Lamar E."/>
            <person name="Latreille P."/>
            <person name="Leonard S."/>
            <person name="Meyer R."/>
            <person name="Mulvaney E."/>
            <person name="Ozersky P."/>
            <person name="Riley A."/>
            <person name="Strowmatt C."/>
            <person name="Wagner-McPherson C."/>
            <person name="Wollam A."/>
            <person name="Yoakum M."/>
            <person name="Bell M."/>
            <person name="Dedhia N."/>
            <person name="Parnell L."/>
            <person name="Shah R."/>
            <person name="Rodriguez M."/>
            <person name="Hoon See L."/>
            <person name="Vil D."/>
            <person name="Baker J."/>
            <person name="Kirchoff K."/>
            <person name="Toth K."/>
            <person name="King L."/>
            <person name="Bahret A."/>
            <person name="Miller B."/>
            <person name="Marra M.A."/>
            <person name="Martienssen R."/>
            <person name="McCombie W.R."/>
            <person name="Wilson R.K."/>
            <person name="Murphy G."/>
            <person name="Bancroft I."/>
            <person name="Volckaert G."/>
            <person name="Wambutt R."/>
            <person name="Duesterhoeft A."/>
            <person name="Stiekema W."/>
            <person name="Pohl T."/>
            <person name="Entian K.-D."/>
            <person name="Terryn N."/>
            <person name="Hartley N."/>
            <person name="Bent E."/>
            <person name="Johnson S."/>
            <person name="Langham S.-A."/>
            <person name="McCullagh B."/>
            <person name="Robben J."/>
            <person name="Grymonprez B."/>
            <person name="Zimmermann W."/>
            <person name="Ramsperger U."/>
            <person name="Wedler H."/>
            <person name="Balke K."/>
            <person name="Wedler E."/>
            <person name="Peters S."/>
            <person name="van Staveren M."/>
            <person name="Dirkse W."/>
            <person name="Mooijman P."/>
            <person name="Klein Lankhorst R."/>
            <person name="Weitzenegger T."/>
            <person name="Bothe G."/>
            <person name="Rose M."/>
            <person name="Hauf J."/>
            <person name="Berneiser S."/>
            <person name="Hempel S."/>
            <person name="Feldpausch M."/>
            <person name="Lamberth S."/>
            <person name="Villarroel R."/>
            <person name="Gielen J."/>
            <person name="Ardiles W."/>
            <person name="Bents O."/>
            <person name="Lemcke K."/>
            <person name="Kolesov G."/>
            <person name="Mayer K.F.X."/>
            <person name="Rudd S."/>
            <person name="Schoof H."/>
            <person name="Schueller C."/>
            <person name="Zaccaria P."/>
            <person name="Mewes H.-W."/>
            <person name="Bevan M."/>
            <person name="Fransz P.F."/>
        </authorList>
    </citation>
    <scope>NUCLEOTIDE SEQUENCE [LARGE SCALE GENOMIC DNA]</scope>
    <source>
        <strain>cv. Columbia</strain>
    </source>
</reference>
<reference key="2">
    <citation type="journal article" date="2017" name="Plant J.">
        <title>Araport11: a complete reannotation of the Arabidopsis thaliana reference genome.</title>
        <authorList>
            <person name="Cheng C.Y."/>
            <person name="Krishnakumar V."/>
            <person name="Chan A.P."/>
            <person name="Thibaud-Nissen F."/>
            <person name="Schobel S."/>
            <person name="Town C.D."/>
        </authorList>
    </citation>
    <scope>GENOME REANNOTATION</scope>
    <source>
        <strain>cv. Columbia</strain>
    </source>
</reference>
<reference key="3">
    <citation type="submission" date="2006-07" db="EMBL/GenBank/DDBJ databases">
        <title>Large-scale analysis of RIKEN Arabidopsis full-length (RAFL) cDNAs.</title>
        <authorList>
            <person name="Totoki Y."/>
            <person name="Seki M."/>
            <person name="Ishida J."/>
            <person name="Nakajima M."/>
            <person name="Enju A."/>
            <person name="Kamiya A."/>
            <person name="Narusaka M."/>
            <person name="Shin-i T."/>
            <person name="Nakagawa M."/>
            <person name="Sakamoto N."/>
            <person name="Oishi K."/>
            <person name="Kohara Y."/>
            <person name="Kobayashi M."/>
            <person name="Toyoda A."/>
            <person name="Sakaki Y."/>
            <person name="Sakurai T."/>
            <person name="Iida K."/>
            <person name="Akiyama K."/>
            <person name="Satou M."/>
            <person name="Toyoda T."/>
            <person name="Konagaya A."/>
            <person name="Carninci P."/>
            <person name="Kawai J."/>
            <person name="Hayashizaki Y."/>
            <person name="Shinozaki K."/>
        </authorList>
    </citation>
    <scope>NUCLEOTIDE SEQUENCE [LARGE SCALE MRNA] OF 104-927</scope>
    <source>
        <strain>cv. Columbia</strain>
    </source>
</reference>
<reference key="4">
    <citation type="journal article" date="2006" name="Development">
        <title>LONGIFOLIA1 and LONGIFOLIA2, two homologous genes, regulate longitudinal cell elongation in Arabidopsis.</title>
        <authorList>
            <person name="Lee Y.K."/>
            <person name="Kim G.T."/>
            <person name="Kim I.J."/>
            <person name="Park J."/>
            <person name="Kwak S.S."/>
            <person name="Choi G."/>
            <person name="Chung W.I."/>
        </authorList>
    </citation>
    <scope>FUNCTION</scope>
    <scope>SUBCELLULAR LOCATION</scope>
    <scope>TISSUE SPECIFICITY</scope>
    <scope>DISRUPTION PHENOTYPE</scope>
</reference>
<reference key="5">
    <citation type="journal article" date="2012" name="Plant Cell">
        <title>The Arabidopsis TRM1-TON1 interaction reveals a recruitment network common to plant cortical microtubule arrays and eukaryotic centrosomes.</title>
        <authorList>
            <person name="Drevensek S."/>
            <person name="Goussot M."/>
            <person name="Duroc Y."/>
            <person name="Christodoulidou A."/>
            <person name="Steyaert S."/>
            <person name="Schaefer E."/>
            <person name="Duvernois E."/>
            <person name="Grandjean O."/>
            <person name="Vantard M."/>
            <person name="Bouchez D."/>
            <person name="Pastuglia M."/>
        </authorList>
    </citation>
    <scope>INTERACTION WITH TON1A AND TON1B</scope>
</reference>
<feature type="chain" id="PRO_0000420918" description="Protein LONGIFOLIA 1">
    <location>
        <begin position="1"/>
        <end position="927"/>
    </location>
</feature>
<feature type="region of interest" description="Disordered" evidence="1">
    <location>
        <begin position="41"/>
        <end position="198"/>
    </location>
</feature>
<feature type="region of interest" description="Disordered" evidence="1">
    <location>
        <begin position="210"/>
        <end position="257"/>
    </location>
</feature>
<feature type="region of interest" description="Disordered" evidence="1">
    <location>
        <begin position="460"/>
        <end position="588"/>
    </location>
</feature>
<feature type="region of interest" description="Disordered" evidence="1">
    <location>
        <begin position="605"/>
        <end position="626"/>
    </location>
</feature>
<feature type="compositionally biased region" description="Low complexity" evidence="1">
    <location>
        <begin position="86"/>
        <end position="114"/>
    </location>
</feature>
<feature type="compositionally biased region" description="Polar residues" evidence="1">
    <location>
        <begin position="115"/>
        <end position="125"/>
    </location>
</feature>
<feature type="compositionally biased region" description="Basic and acidic residues" evidence="1">
    <location>
        <begin position="146"/>
        <end position="165"/>
    </location>
</feature>
<feature type="compositionally biased region" description="Polar residues" evidence="1">
    <location>
        <begin position="182"/>
        <end position="193"/>
    </location>
</feature>
<feature type="compositionally biased region" description="Basic and acidic residues" evidence="1">
    <location>
        <begin position="210"/>
        <end position="226"/>
    </location>
</feature>
<feature type="compositionally biased region" description="Low complexity" evidence="1">
    <location>
        <begin position="232"/>
        <end position="245"/>
    </location>
</feature>
<feature type="compositionally biased region" description="Polar residues" evidence="1">
    <location>
        <begin position="483"/>
        <end position="500"/>
    </location>
</feature>
<feature type="compositionally biased region" description="Polar residues" evidence="1">
    <location>
        <begin position="538"/>
        <end position="553"/>
    </location>
</feature>
<feature type="compositionally biased region" description="Basic and acidic residues" evidence="1">
    <location>
        <begin position="569"/>
        <end position="584"/>
    </location>
</feature>
<feature type="compositionally biased region" description="Basic and acidic residues" evidence="1">
    <location>
        <begin position="605"/>
        <end position="616"/>
    </location>
</feature>
<gene>
    <name type="primary">LNG1</name>
    <name type="synonym">TRM2</name>
    <name type="ordered locus">At5g15580</name>
    <name type="ORF">T20K14.190</name>
</gene>
<accession>Q9LF24</accession>
<accession>Q0WQ78</accession>
<sequence>MSAKLLYNLSDENPNLNKQIGCMNGIFQVFYRQHYPPRRVTGDELKSLPSGKASDNVGDTNISADKKETEKSKKKKTAKEKQRGVSSESSSRLSFSSSPCSSSFSSADISTTASQFEQPGLSNGENPVREPTNGSPRWGGLMMPSDIRELVRSSIHKETRTRDEEALSQQPKSARANVSLLKESSPSRNSNEWSEGRRVVKLKDSPRFSYDERETRKTGAKLKETPRLSLDSRSNSFRSARSSCSPEPQELVTGHRRTTSSVVAKLMGLEVIPDEPVTIQNRENRFCDSPRPTSRVEVDLQRSRGFDSIKKMMPAKFPMKASPWAQVDGAKNQVKIPDATTLTVYGEIQKRLSQLEFKKSEKDLRALKQILEAMEKTQQLISKDDDDNKTLCSSNFMQRNNQPIPSAINTSSMNFKSSSIVVMKAATAPVFKDTGIAGSASFSPRNVALPNVKVGNLRQAQKVIPRKQSAMDVTPRPGYYKGQTESTMKNTSTRPLQSKSDMAKSGKIQKPSVSLRTPPKKLGFEKQSRPTSPKPELNKNQRQQLSRQQTESASPRRKPGIKSRGLQQSEDRLSDESSDLRSLRSDSNVSLASNLDTEVTSRYNYERNSDITEQHTPKQRSPDLGMRSLSKPLKVTVEQPSPVSVLDVAFDEDDSPSPVRKISIVFKEDDNLSSEESHWMNKNNNLCRSIVWPESNTSLKQPDAELTEGFMEDDAEFKNGDHKYISEIMLASGLLRDIDYSMISIQLHQAHLPINPSLFFVLEQNKTSNVSLQDNKHKGRGFGQQQTVNLVERSKRKLIFDTINEILAHRFAAEGCTKQPSITLSISTQRTHEKSSRGEELLQTLCSEIDRLQDNSKCILDEDDEDLIWEDLQSHGMNWKEIEGETPGLVLDIERLIFKDLIGEVVTSEFAAFPRMLSGQPRQLFHC</sequence>